<sequence>MPSARGKSKSKAPITFGDLAIYFSQEEWEWLSPIQKDLYEDVMLENYRNLVSLGLSFRRPNVITLLEKGKAPWMVEPVRRRRAPDSGSKCETKKLPPNQCNKSGQSICQKLVSAQQKAPTRKSGCNKNSVLVKPKKGHSGKKPLKCNDCGKTFSRSFSLKLHQNIHTGEKPFECSNCRKAFRQISSILLHQRIHSGKKSHECNKCGESFNQRTTLILHMRIHDGKEILDCGKALSQCQSFNIHQKIHVVGNVCQCRKCGKAFNQMSSLLLHKKIHNGKKTHKYNKCGRGFKKKSVFVVHKRIHAGEKIPENAKALSQSLQQRSHHLENPFKCRKCGKLFNRISPLMLHQRIHTSEKPYKCDKCDKFFRRLSTLILHLRIHNGEKLYRCNKCEKVCNRHSSLIQHQKVHTKKKKLFECKECGKMFSGTANLKIHQNIHSEEKPFKCNKCSKVFGRQSFLIEHQRIHTGEKPYQCEECGKAFSHRISLTRHKRIHTEDRPYECDQCGKAFSQSAHLAQHERIHTGEKPYTCKTCGKAFSQRTSLILHERSHTGEKPYECNECGKAFSSGSDLIRHQRSHSSEKPYECSKCGKAYSRSSSLIRHQNTHSEEKA</sequence>
<comment type="function">
    <text evidence="1">May be involved in transcriptional regulation.</text>
</comment>
<comment type="interaction">
    <interactant intactId="EBI-7115499">
        <id>Q5HYK9</id>
    </interactant>
    <interactant intactId="EBI-10172290">
        <id>P60409</id>
        <label>KRTAP10-7</label>
    </interactant>
    <organismsDiffer>false</organismsDiffer>
    <experiments>3</experiments>
</comment>
<comment type="subcellular location">
    <subcellularLocation>
        <location evidence="8">Nucleus</location>
    </subcellularLocation>
</comment>
<comment type="similarity">
    <text evidence="8">Belongs to the krueppel C2H2-type zinc-finger protein family.</text>
</comment>
<comment type="sequence caution" evidence="8">
    <conflict type="erroneous initiation">
        <sequence resource="EMBL-CDS" id="AAH74898"/>
    </conflict>
</comment>
<comment type="sequence caution" evidence="8">
    <conflict type="erroneous initiation">
        <sequence resource="EMBL-CDS" id="AAH74899"/>
    </conflict>
</comment>
<organism>
    <name type="scientific">Homo sapiens</name>
    <name type="common">Human</name>
    <dbReference type="NCBI Taxonomy" id="9606"/>
    <lineage>
        <taxon>Eukaryota</taxon>
        <taxon>Metazoa</taxon>
        <taxon>Chordata</taxon>
        <taxon>Craniata</taxon>
        <taxon>Vertebrata</taxon>
        <taxon>Euteleostomi</taxon>
        <taxon>Mammalia</taxon>
        <taxon>Eutheria</taxon>
        <taxon>Euarchontoglires</taxon>
        <taxon>Primates</taxon>
        <taxon>Haplorrhini</taxon>
        <taxon>Catarrhini</taxon>
        <taxon>Hominidae</taxon>
        <taxon>Homo</taxon>
    </lineage>
</organism>
<keyword id="KW-0238">DNA-binding</keyword>
<keyword id="KW-0479">Metal-binding</keyword>
<keyword id="KW-0539">Nucleus</keyword>
<keyword id="KW-1267">Proteomics identification</keyword>
<keyword id="KW-1185">Reference proteome</keyword>
<keyword id="KW-0677">Repeat</keyword>
<keyword id="KW-0804">Transcription</keyword>
<keyword id="KW-0805">Transcription regulation</keyword>
<keyword id="KW-0862">Zinc</keyword>
<keyword id="KW-0863">Zinc-finger</keyword>
<reference key="1">
    <citation type="journal article" date="2004" name="Nat. Genet.">
        <title>Complete sequencing and characterization of 21,243 full-length human cDNAs.</title>
        <authorList>
            <person name="Ota T."/>
            <person name="Suzuki Y."/>
            <person name="Nishikawa T."/>
            <person name="Otsuki T."/>
            <person name="Sugiyama T."/>
            <person name="Irie R."/>
            <person name="Wakamatsu A."/>
            <person name="Hayashi K."/>
            <person name="Sato H."/>
            <person name="Nagai K."/>
            <person name="Kimura K."/>
            <person name="Makita H."/>
            <person name="Sekine M."/>
            <person name="Obayashi M."/>
            <person name="Nishi T."/>
            <person name="Shibahara T."/>
            <person name="Tanaka T."/>
            <person name="Ishii S."/>
            <person name="Yamamoto J."/>
            <person name="Saito K."/>
            <person name="Kawai Y."/>
            <person name="Isono Y."/>
            <person name="Nakamura Y."/>
            <person name="Nagahari K."/>
            <person name="Murakami K."/>
            <person name="Yasuda T."/>
            <person name="Iwayanagi T."/>
            <person name="Wagatsuma M."/>
            <person name="Shiratori A."/>
            <person name="Sudo H."/>
            <person name="Hosoiri T."/>
            <person name="Kaku Y."/>
            <person name="Kodaira H."/>
            <person name="Kondo H."/>
            <person name="Sugawara M."/>
            <person name="Takahashi M."/>
            <person name="Kanda K."/>
            <person name="Yokoi T."/>
            <person name="Furuya T."/>
            <person name="Kikkawa E."/>
            <person name="Omura Y."/>
            <person name="Abe K."/>
            <person name="Kamihara K."/>
            <person name="Katsuta N."/>
            <person name="Sato K."/>
            <person name="Tanikawa M."/>
            <person name="Yamazaki M."/>
            <person name="Ninomiya K."/>
            <person name="Ishibashi T."/>
            <person name="Yamashita H."/>
            <person name="Murakawa K."/>
            <person name="Fujimori K."/>
            <person name="Tanai H."/>
            <person name="Kimata M."/>
            <person name="Watanabe M."/>
            <person name="Hiraoka S."/>
            <person name="Chiba Y."/>
            <person name="Ishida S."/>
            <person name="Ono Y."/>
            <person name="Takiguchi S."/>
            <person name="Watanabe S."/>
            <person name="Yosida M."/>
            <person name="Hotuta T."/>
            <person name="Kusano J."/>
            <person name="Kanehori K."/>
            <person name="Takahashi-Fujii A."/>
            <person name="Hara H."/>
            <person name="Tanase T.-O."/>
            <person name="Nomura Y."/>
            <person name="Togiya S."/>
            <person name="Komai F."/>
            <person name="Hara R."/>
            <person name="Takeuchi K."/>
            <person name="Arita M."/>
            <person name="Imose N."/>
            <person name="Musashino K."/>
            <person name="Yuuki H."/>
            <person name="Oshima A."/>
            <person name="Sasaki N."/>
            <person name="Aotsuka S."/>
            <person name="Yoshikawa Y."/>
            <person name="Matsunawa H."/>
            <person name="Ichihara T."/>
            <person name="Shiohata N."/>
            <person name="Sano S."/>
            <person name="Moriya S."/>
            <person name="Momiyama H."/>
            <person name="Satoh N."/>
            <person name="Takami S."/>
            <person name="Terashima Y."/>
            <person name="Suzuki O."/>
            <person name="Nakagawa S."/>
            <person name="Senoh A."/>
            <person name="Mizoguchi H."/>
            <person name="Goto Y."/>
            <person name="Shimizu F."/>
            <person name="Wakebe H."/>
            <person name="Hishigaki H."/>
            <person name="Watanabe T."/>
            <person name="Sugiyama A."/>
            <person name="Takemoto M."/>
            <person name="Kawakami B."/>
            <person name="Yamazaki M."/>
            <person name="Watanabe K."/>
            <person name="Kumagai A."/>
            <person name="Itakura S."/>
            <person name="Fukuzumi Y."/>
            <person name="Fujimori Y."/>
            <person name="Komiyama M."/>
            <person name="Tashiro H."/>
            <person name="Tanigami A."/>
            <person name="Fujiwara T."/>
            <person name="Ono T."/>
            <person name="Yamada K."/>
            <person name="Fujii Y."/>
            <person name="Ozaki K."/>
            <person name="Hirao M."/>
            <person name="Ohmori Y."/>
            <person name="Kawabata A."/>
            <person name="Hikiji T."/>
            <person name="Kobatake N."/>
            <person name="Inagaki H."/>
            <person name="Ikema Y."/>
            <person name="Okamoto S."/>
            <person name="Okitani R."/>
            <person name="Kawakami T."/>
            <person name="Noguchi S."/>
            <person name="Itoh T."/>
            <person name="Shigeta K."/>
            <person name="Senba T."/>
            <person name="Matsumura K."/>
            <person name="Nakajima Y."/>
            <person name="Mizuno T."/>
            <person name="Morinaga M."/>
            <person name="Sasaki M."/>
            <person name="Togashi T."/>
            <person name="Oyama M."/>
            <person name="Hata H."/>
            <person name="Watanabe M."/>
            <person name="Komatsu T."/>
            <person name="Mizushima-Sugano J."/>
            <person name="Satoh T."/>
            <person name="Shirai Y."/>
            <person name="Takahashi Y."/>
            <person name="Nakagawa K."/>
            <person name="Okumura K."/>
            <person name="Nagase T."/>
            <person name="Nomura N."/>
            <person name="Kikuchi H."/>
            <person name="Masuho Y."/>
            <person name="Yamashita R."/>
            <person name="Nakai K."/>
            <person name="Yada T."/>
            <person name="Nakamura Y."/>
            <person name="Ohara O."/>
            <person name="Isogai T."/>
            <person name="Sugano S."/>
        </authorList>
    </citation>
    <scope>NUCLEOTIDE SEQUENCE [LARGE SCALE MRNA]</scope>
    <scope>VARIANT LEU-134</scope>
</reference>
<reference key="2">
    <citation type="journal article" date="2007" name="BMC Genomics">
        <title>The full-ORF clone resource of the German cDNA consortium.</title>
        <authorList>
            <person name="Bechtel S."/>
            <person name="Rosenfelder H."/>
            <person name="Duda A."/>
            <person name="Schmidt C.P."/>
            <person name="Ernst U."/>
            <person name="Wellenreuther R."/>
            <person name="Mehrle A."/>
            <person name="Schuster C."/>
            <person name="Bahr A."/>
            <person name="Bloecker H."/>
            <person name="Heubner D."/>
            <person name="Hoerlein A."/>
            <person name="Michel G."/>
            <person name="Wedler H."/>
            <person name="Koehrer K."/>
            <person name="Ottenwaelder B."/>
            <person name="Poustka A."/>
            <person name="Wiemann S."/>
            <person name="Schupp I."/>
        </authorList>
    </citation>
    <scope>NUCLEOTIDE SEQUENCE [LARGE SCALE MRNA]</scope>
    <scope>VARIANT LEU-134</scope>
    <source>
        <tissue>Endometrium</tissue>
    </source>
</reference>
<reference key="3">
    <citation type="journal article" date="2004" name="Nature">
        <title>The DNA sequence and biology of human chromosome 19.</title>
        <authorList>
            <person name="Grimwood J."/>
            <person name="Gordon L.A."/>
            <person name="Olsen A.S."/>
            <person name="Terry A."/>
            <person name="Schmutz J."/>
            <person name="Lamerdin J.E."/>
            <person name="Hellsten U."/>
            <person name="Goodstein D."/>
            <person name="Couronne O."/>
            <person name="Tran-Gyamfi M."/>
            <person name="Aerts A."/>
            <person name="Altherr M."/>
            <person name="Ashworth L."/>
            <person name="Bajorek E."/>
            <person name="Black S."/>
            <person name="Branscomb E."/>
            <person name="Caenepeel S."/>
            <person name="Carrano A.V."/>
            <person name="Caoile C."/>
            <person name="Chan Y.M."/>
            <person name="Christensen M."/>
            <person name="Cleland C.A."/>
            <person name="Copeland A."/>
            <person name="Dalin E."/>
            <person name="Dehal P."/>
            <person name="Denys M."/>
            <person name="Detter J.C."/>
            <person name="Escobar J."/>
            <person name="Flowers D."/>
            <person name="Fotopulos D."/>
            <person name="Garcia C."/>
            <person name="Georgescu A.M."/>
            <person name="Glavina T."/>
            <person name="Gomez M."/>
            <person name="Gonzales E."/>
            <person name="Groza M."/>
            <person name="Hammon N."/>
            <person name="Hawkins T."/>
            <person name="Haydu L."/>
            <person name="Ho I."/>
            <person name="Huang W."/>
            <person name="Israni S."/>
            <person name="Jett J."/>
            <person name="Kadner K."/>
            <person name="Kimball H."/>
            <person name="Kobayashi A."/>
            <person name="Larionov V."/>
            <person name="Leem S.-H."/>
            <person name="Lopez F."/>
            <person name="Lou Y."/>
            <person name="Lowry S."/>
            <person name="Malfatti S."/>
            <person name="Martinez D."/>
            <person name="McCready P.M."/>
            <person name="Medina C."/>
            <person name="Morgan J."/>
            <person name="Nelson K."/>
            <person name="Nolan M."/>
            <person name="Ovcharenko I."/>
            <person name="Pitluck S."/>
            <person name="Pollard M."/>
            <person name="Popkie A.P."/>
            <person name="Predki P."/>
            <person name="Quan G."/>
            <person name="Ramirez L."/>
            <person name="Rash S."/>
            <person name="Retterer J."/>
            <person name="Rodriguez A."/>
            <person name="Rogers S."/>
            <person name="Salamov A."/>
            <person name="Salazar A."/>
            <person name="She X."/>
            <person name="Smith D."/>
            <person name="Slezak T."/>
            <person name="Solovyev V."/>
            <person name="Thayer N."/>
            <person name="Tice H."/>
            <person name="Tsai M."/>
            <person name="Ustaszewska A."/>
            <person name="Vo N."/>
            <person name="Wagner M."/>
            <person name="Wheeler J."/>
            <person name="Wu K."/>
            <person name="Xie G."/>
            <person name="Yang J."/>
            <person name="Dubchak I."/>
            <person name="Furey T.S."/>
            <person name="DeJong P."/>
            <person name="Dickson M."/>
            <person name="Gordon D."/>
            <person name="Eichler E.E."/>
            <person name="Pennacchio L.A."/>
            <person name="Richardson P."/>
            <person name="Stubbs L."/>
            <person name="Rokhsar D.S."/>
            <person name="Myers R.M."/>
            <person name="Rubin E.M."/>
            <person name="Lucas S.M."/>
        </authorList>
    </citation>
    <scope>NUCLEOTIDE SEQUENCE [LARGE SCALE GENOMIC DNA]</scope>
</reference>
<reference key="4">
    <citation type="journal article" date="2004" name="Genome Res.">
        <title>The status, quality, and expansion of the NIH full-length cDNA project: the Mammalian Gene Collection (MGC).</title>
        <authorList>
            <consortium name="The MGC Project Team"/>
        </authorList>
    </citation>
    <scope>NUCLEOTIDE SEQUENCE [LARGE SCALE MRNA]</scope>
    <scope>VARIANT LEU-134</scope>
    <source>
        <tissue>Lung</tissue>
        <tissue>Testis</tissue>
    </source>
</reference>
<name>ZN667_HUMAN</name>
<dbReference type="EMBL" id="AK024073">
    <property type="status" value="NOT_ANNOTATED_CDS"/>
    <property type="molecule type" value="mRNA"/>
</dbReference>
<dbReference type="EMBL" id="AK056508">
    <property type="protein sequence ID" value="BAG51734.1"/>
    <property type="molecule type" value="mRNA"/>
</dbReference>
<dbReference type="EMBL" id="BX647401">
    <property type="protein sequence ID" value="CAI46040.1"/>
    <property type="molecule type" value="mRNA"/>
</dbReference>
<dbReference type="EMBL" id="AC006116">
    <property type="status" value="NOT_ANNOTATED_CDS"/>
    <property type="molecule type" value="Genomic_DNA"/>
</dbReference>
<dbReference type="EMBL" id="AC013256">
    <property type="status" value="NOT_ANNOTATED_CDS"/>
    <property type="molecule type" value="Genomic_DNA"/>
</dbReference>
<dbReference type="EMBL" id="BC074898">
    <property type="protein sequence ID" value="AAH74898.2"/>
    <property type="status" value="ALT_INIT"/>
    <property type="molecule type" value="mRNA"/>
</dbReference>
<dbReference type="EMBL" id="BC074899">
    <property type="protein sequence ID" value="AAH74899.2"/>
    <property type="status" value="ALT_INIT"/>
    <property type="molecule type" value="mRNA"/>
</dbReference>
<dbReference type="EMBL" id="BC136388">
    <property type="protein sequence ID" value="AAI36389.1"/>
    <property type="molecule type" value="mRNA"/>
</dbReference>
<dbReference type="EMBL" id="BC150593">
    <property type="protein sequence ID" value="AAI50594.1"/>
    <property type="molecule type" value="mRNA"/>
</dbReference>
<dbReference type="CCDS" id="CCDS12944.1"/>
<dbReference type="RefSeq" id="NP_001308285.1">
    <property type="nucleotide sequence ID" value="NM_001321356.2"/>
</dbReference>
<dbReference type="RefSeq" id="NP_071386.3">
    <property type="nucleotide sequence ID" value="NM_022103.3"/>
</dbReference>
<dbReference type="RefSeq" id="XP_011525510.1">
    <property type="nucleotide sequence ID" value="XM_011527208.3"/>
</dbReference>
<dbReference type="RefSeq" id="XP_011525511.1">
    <property type="nucleotide sequence ID" value="XM_011527209.1"/>
</dbReference>
<dbReference type="RefSeq" id="XP_024307405.1">
    <property type="nucleotide sequence ID" value="XM_024451637.2"/>
</dbReference>
<dbReference type="RefSeq" id="XP_024307406.1">
    <property type="nucleotide sequence ID" value="XM_024451638.2"/>
</dbReference>
<dbReference type="RefSeq" id="XP_024307408.1">
    <property type="nucleotide sequence ID" value="XM_024451640.2"/>
</dbReference>
<dbReference type="RefSeq" id="XP_024307409.1">
    <property type="nucleotide sequence ID" value="XM_024451641.2"/>
</dbReference>
<dbReference type="RefSeq" id="XP_024307410.1">
    <property type="nucleotide sequence ID" value="XM_024451642.2"/>
</dbReference>
<dbReference type="RefSeq" id="XP_024307411.1">
    <property type="nucleotide sequence ID" value="XM_024451643.2"/>
</dbReference>
<dbReference type="RefSeq" id="XP_024307412.1">
    <property type="nucleotide sequence ID" value="XM_024451644.2"/>
</dbReference>
<dbReference type="RefSeq" id="XP_024307413.1">
    <property type="nucleotide sequence ID" value="XM_024451645.2"/>
</dbReference>
<dbReference type="RefSeq" id="XP_024307414.1">
    <property type="nucleotide sequence ID" value="XM_024451646.2"/>
</dbReference>
<dbReference type="RefSeq" id="XP_024307415.1">
    <property type="nucleotide sequence ID" value="XM_024451647.2"/>
</dbReference>
<dbReference type="RefSeq" id="XP_047295163.1">
    <property type="nucleotide sequence ID" value="XM_047439207.1"/>
</dbReference>
<dbReference type="RefSeq" id="XP_047295164.1">
    <property type="nucleotide sequence ID" value="XM_047439208.1"/>
</dbReference>
<dbReference type="RefSeq" id="XP_047295165.1">
    <property type="nucleotide sequence ID" value="XM_047439209.1"/>
</dbReference>
<dbReference type="RefSeq" id="XP_047295166.1">
    <property type="nucleotide sequence ID" value="XM_047439210.1"/>
</dbReference>
<dbReference type="RefSeq" id="XP_047295167.1">
    <property type="nucleotide sequence ID" value="XM_047439211.1"/>
</dbReference>
<dbReference type="RefSeq" id="XP_047295168.1">
    <property type="nucleotide sequence ID" value="XM_047439212.1"/>
</dbReference>
<dbReference type="SMR" id="Q5HYK9"/>
<dbReference type="BioGRID" id="122002">
    <property type="interactions" value="8"/>
</dbReference>
<dbReference type="FunCoup" id="Q5HYK9">
    <property type="interactions" value="2"/>
</dbReference>
<dbReference type="IntAct" id="Q5HYK9">
    <property type="interactions" value="3"/>
</dbReference>
<dbReference type="MINT" id="Q5HYK9"/>
<dbReference type="STRING" id="9606.ENSP00000439402"/>
<dbReference type="iPTMnet" id="Q5HYK9"/>
<dbReference type="PhosphoSitePlus" id="Q5HYK9"/>
<dbReference type="BioMuta" id="ZNF667"/>
<dbReference type="DMDM" id="215273933"/>
<dbReference type="jPOST" id="Q5HYK9"/>
<dbReference type="MassIVE" id="Q5HYK9"/>
<dbReference type="PaxDb" id="9606-ENSP00000439402"/>
<dbReference type="PeptideAtlas" id="Q5HYK9"/>
<dbReference type="ProteomicsDB" id="62949"/>
<dbReference type="Antibodypedia" id="33211">
    <property type="antibodies" value="105 antibodies from 19 providers"/>
</dbReference>
<dbReference type="DNASU" id="63934"/>
<dbReference type="Ensembl" id="ENST00000292069.10">
    <property type="protein sequence ID" value="ENSP00000292069.5"/>
    <property type="gene ID" value="ENSG00000198046.13"/>
</dbReference>
<dbReference type="Ensembl" id="ENST00000504904.8">
    <property type="protein sequence ID" value="ENSP00000439402.1"/>
    <property type="gene ID" value="ENSG00000198046.13"/>
</dbReference>
<dbReference type="GeneID" id="63934"/>
<dbReference type="KEGG" id="hsa:63934"/>
<dbReference type="MANE-Select" id="ENST00000504904.8">
    <property type="protein sequence ID" value="ENSP00000439402.1"/>
    <property type="RefSeq nucleotide sequence ID" value="NM_001321356.2"/>
    <property type="RefSeq protein sequence ID" value="NP_001308285.1"/>
</dbReference>
<dbReference type="UCSC" id="uc002qnd.4">
    <property type="organism name" value="human"/>
</dbReference>
<dbReference type="AGR" id="HGNC:28854"/>
<dbReference type="CTD" id="63934"/>
<dbReference type="DisGeNET" id="63934"/>
<dbReference type="GeneCards" id="ZNF667"/>
<dbReference type="HGNC" id="HGNC:28854">
    <property type="gene designation" value="ZNF667"/>
</dbReference>
<dbReference type="HPA" id="ENSG00000198046">
    <property type="expression patterns" value="Low tissue specificity"/>
</dbReference>
<dbReference type="MIM" id="611024">
    <property type="type" value="gene"/>
</dbReference>
<dbReference type="neXtProt" id="NX_Q5HYK9"/>
<dbReference type="OpenTargets" id="ENSG00000198046"/>
<dbReference type="PharmGKB" id="PA142670514"/>
<dbReference type="VEuPathDB" id="HostDB:ENSG00000198046"/>
<dbReference type="eggNOG" id="KOG1721">
    <property type="taxonomic scope" value="Eukaryota"/>
</dbReference>
<dbReference type="GeneTree" id="ENSGT00390000021477"/>
<dbReference type="InParanoid" id="Q5HYK9"/>
<dbReference type="OMA" id="RIHMSKK"/>
<dbReference type="OrthoDB" id="8922241at2759"/>
<dbReference type="PAN-GO" id="Q5HYK9">
    <property type="GO annotations" value="3 GO annotations based on evolutionary models"/>
</dbReference>
<dbReference type="PhylomeDB" id="Q5HYK9"/>
<dbReference type="TreeFam" id="TF341817"/>
<dbReference type="PathwayCommons" id="Q5HYK9"/>
<dbReference type="Reactome" id="R-HSA-212436">
    <property type="pathway name" value="Generic Transcription Pathway"/>
</dbReference>
<dbReference type="SignaLink" id="Q5HYK9"/>
<dbReference type="BioGRID-ORCS" id="63934">
    <property type="hits" value="13 hits in 1162 CRISPR screens"/>
</dbReference>
<dbReference type="ChiTaRS" id="ZNF667">
    <property type="organism name" value="human"/>
</dbReference>
<dbReference type="GenomeRNAi" id="63934"/>
<dbReference type="Pharos" id="Q5HYK9">
    <property type="development level" value="Tbio"/>
</dbReference>
<dbReference type="PRO" id="PR:Q5HYK9"/>
<dbReference type="Proteomes" id="UP000005640">
    <property type="component" value="Chromosome 19"/>
</dbReference>
<dbReference type="RNAct" id="Q5HYK9">
    <property type="molecule type" value="protein"/>
</dbReference>
<dbReference type="Bgee" id="ENSG00000198046">
    <property type="expression patterns" value="Expressed in Brodmann (1909) area 23 and 156 other cell types or tissues"/>
</dbReference>
<dbReference type="ExpressionAtlas" id="Q5HYK9">
    <property type="expression patterns" value="baseline and differential"/>
</dbReference>
<dbReference type="GO" id="GO:0005634">
    <property type="term" value="C:nucleus"/>
    <property type="evidence" value="ECO:0007669"/>
    <property type="project" value="UniProtKB-SubCell"/>
</dbReference>
<dbReference type="GO" id="GO:0003700">
    <property type="term" value="F:DNA-binding transcription factor activity"/>
    <property type="evidence" value="ECO:0000318"/>
    <property type="project" value="GO_Central"/>
</dbReference>
<dbReference type="GO" id="GO:0000978">
    <property type="term" value="F:RNA polymerase II cis-regulatory region sequence-specific DNA binding"/>
    <property type="evidence" value="ECO:0000318"/>
    <property type="project" value="GO_Central"/>
</dbReference>
<dbReference type="GO" id="GO:0008270">
    <property type="term" value="F:zinc ion binding"/>
    <property type="evidence" value="ECO:0007669"/>
    <property type="project" value="UniProtKB-KW"/>
</dbReference>
<dbReference type="GO" id="GO:0006357">
    <property type="term" value="P:regulation of transcription by RNA polymerase II"/>
    <property type="evidence" value="ECO:0000318"/>
    <property type="project" value="GO_Central"/>
</dbReference>
<dbReference type="CDD" id="cd07765">
    <property type="entry name" value="KRAB_A-box"/>
    <property type="match status" value="1"/>
</dbReference>
<dbReference type="FunFam" id="3.30.160.60:FF:000062">
    <property type="entry name" value="RB-associated KRAB zinc finger protein-like"/>
    <property type="match status" value="1"/>
</dbReference>
<dbReference type="FunFam" id="3.30.160.60:FF:000478">
    <property type="entry name" value="Zinc finger protein 133"/>
    <property type="match status" value="1"/>
</dbReference>
<dbReference type="FunFam" id="3.30.160.60:FF:000005">
    <property type="entry name" value="Zinc finger protein 14 homolog"/>
    <property type="match status" value="1"/>
</dbReference>
<dbReference type="FunFam" id="3.30.160.60:FF:000053">
    <property type="entry name" value="zinc finger protein 182 isoform X1"/>
    <property type="match status" value="1"/>
</dbReference>
<dbReference type="FunFam" id="3.30.160.60:FF:000295">
    <property type="entry name" value="zinc finger protein 19"/>
    <property type="match status" value="1"/>
</dbReference>
<dbReference type="FunFam" id="3.30.160.60:FF:000016">
    <property type="entry name" value="zinc finger protein 37 homolog"/>
    <property type="match status" value="1"/>
</dbReference>
<dbReference type="FunFam" id="3.30.160.60:FF:001498">
    <property type="entry name" value="Zinc finger protein 404"/>
    <property type="match status" value="1"/>
</dbReference>
<dbReference type="FunFam" id="3.30.160.60:FF:002090">
    <property type="entry name" value="Zinc finger protein 473"/>
    <property type="match status" value="1"/>
</dbReference>
<dbReference type="FunFam" id="3.30.160.60:FF:001803">
    <property type="entry name" value="Zinc finger protein 667"/>
    <property type="match status" value="3"/>
</dbReference>
<dbReference type="FunFam" id="3.30.160.60:FF:003298">
    <property type="entry name" value="Zinc finger protein 667"/>
    <property type="match status" value="1"/>
</dbReference>
<dbReference type="FunFam" id="3.30.160.60:FF:000953">
    <property type="entry name" value="Zinc finger protein 691"/>
    <property type="match status" value="1"/>
</dbReference>
<dbReference type="FunFam" id="3.30.160.60:FF:000896">
    <property type="entry name" value="Zinc finger protein 805"/>
    <property type="match status" value="1"/>
</dbReference>
<dbReference type="Gene3D" id="6.10.140.140">
    <property type="match status" value="1"/>
</dbReference>
<dbReference type="Gene3D" id="3.30.160.60">
    <property type="entry name" value="Classic Zinc Finger"/>
    <property type="match status" value="15"/>
</dbReference>
<dbReference type="InterPro" id="IPR001909">
    <property type="entry name" value="KRAB"/>
</dbReference>
<dbReference type="InterPro" id="IPR036051">
    <property type="entry name" value="KRAB_dom_sf"/>
</dbReference>
<dbReference type="InterPro" id="IPR036236">
    <property type="entry name" value="Znf_C2H2_sf"/>
</dbReference>
<dbReference type="InterPro" id="IPR013087">
    <property type="entry name" value="Znf_C2H2_type"/>
</dbReference>
<dbReference type="PANTHER" id="PTHR24393">
    <property type="entry name" value="ZINC FINGER PROTEIN"/>
    <property type="match status" value="1"/>
</dbReference>
<dbReference type="PANTHER" id="PTHR24393:SF100">
    <property type="entry name" value="ZINC FINGER PROTEIN-RELATED"/>
    <property type="match status" value="1"/>
</dbReference>
<dbReference type="Pfam" id="PF01352">
    <property type="entry name" value="KRAB"/>
    <property type="match status" value="1"/>
</dbReference>
<dbReference type="Pfam" id="PF00096">
    <property type="entry name" value="zf-C2H2"/>
    <property type="match status" value="14"/>
</dbReference>
<dbReference type="SMART" id="SM00349">
    <property type="entry name" value="KRAB"/>
    <property type="match status" value="1"/>
</dbReference>
<dbReference type="SMART" id="SM00355">
    <property type="entry name" value="ZnF_C2H2"/>
    <property type="match status" value="16"/>
</dbReference>
<dbReference type="SUPFAM" id="SSF57667">
    <property type="entry name" value="beta-beta-alpha zinc fingers"/>
    <property type="match status" value="9"/>
</dbReference>
<dbReference type="SUPFAM" id="SSF109640">
    <property type="entry name" value="KRAB domain (Kruppel-associated box)"/>
    <property type="match status" value="1"/>
</dbReference>
<dbReference type="PROSITE" id="PS50805">
    <property type="entry name" value="KRAB"/>
    <property type="match status" value="1"/>
</dbReference>
<dbReference type="PROSITE" id="PS00028">
    <property type="entry name" value="ZINC_FINGER_C2H2_1"/>
    <property type="match status" value="14"/>
</dbReference>
<dbReference type="PROSITE" id="PS50157">
    <property type="entry name" value="ZINC_FINGER_C2H2_2"/>
    <property type="match status" value="15"/>
</dbReference>
<protein>
    <recommendedName>
        <fullName>Zinc finger protein 667</fullName>
    </recommendedName>
</protein>
<gene>
    <name type="primary">ZNF667</name>
</gene>
<accession>Q5HYK9</accession>
<accession>B2RMS6</accession>
<accession>B9EK36</accession>
<accession>Q6B093</accession>
<accession>Q9H807</accession>
<evidence type="ECO:0000250" key="1"/>
<evidence type="ECO:0000255" key="2">
    <source>
        <dbReference type="PROSITE-ProRule" id="PRU00042"/>
    </source>
</evidence>
<evidence type="ECO:0000255" key="3">
    <source>
        <dbReference type="PROSITE-ProRule" id="PRU00119"/>
    </source>
</evidence>
<evidence type="ECO:0000256" key="4">
    <source>
        <dbReference type="SAM" id="MobiDB-lite"/>
    </source>
</evidence>
<evidence type="ECO:0000269" key="5">
    <source>
    </source>
</evidence>
<evidence type="ECO:0000269" key="6">
    <source>
    </source>
</evidence>
<evidence type="ECO:0000269" key="7">
    <source>
    </source>
</evidence>
<evidence type="ECO:0000305" key="8"/>
<feature type="chain" id="PRO_0000251897" description="Zinc finger protein 667">
    <location>
        <begin position="1"/>
        <end position="610"/>
    </location>
</feature>
<feature type="domain" description="KRAB" evidence="3">
    <location>
        <begin position="14"/>
        <end position="85"/>
    </location>
</feature>
<feature type="zinc finger region" description="C2H2-type 1" evidence="2">
    <location>
        <begin position="144"/>
        <end position="166"/>
    </location>
</feature>
<feature type="zinc finger region" description="C2H2-type 2" evidence="2">
    <location>
        <begin position="172"/>
        <end position="194"/>
    </location>
</feature>
<feature type="zinc finger region" description="C2H2-type 3" evidence="2">
    <location>
        <begin position="200"/>
        <end position="222"/>
    </location>
</feature>
<feature type="zinc finger region" description="C2H2-type 4" evidence="2">
    <location>
        <begin position="253"/>
        <end position="275"/>
    </location>
</feature>
<feature type="zinc finger region" description="C2H2-type 5; degenerate" evidence="2">
    <location>
        <begin position="281"/>
        <end position="303"/>
    </location>
</feature>
<feature type="zinc finger region" description="C2H2-type 6" evidence="2">
    <location>
        <begin position="330"/>
        <end position="352"/>
    </location>
</feature>
<feature type="zinc finger region" description="C2H2-type 7" evidence="2">
    <location>
        <begin position="358"/>
        <end position="380"/>
    </location>
</feature>
<feature type="zinc finger region" description="C2H2-type 8" evidence="2">
    <location>
        <begin position="386"/>
        <end position="408"/>
    </location>
</feature>
<feature type="zinc finger region" description="C2H2-type 9" evidence="2">
    <location>
        <begin position="415"/>
        <end position="437"/>
    </location>
</feature>
<feature type="zinc finger region" description="C2H2-type 10" evidence="2">
    <location>
        <begin position="443"/>
        <end position="465"/>
    </location>
</feature>
<feature type="zinc finger region" description="C2H2-type 11" evidence="2">
    <location>
        <begin position="471"/>
        <end position="493"/>
    </location>
</feature>
<feature type="zinc finger region" description="C2H2-type 12" evidence="2">
    <location>
        <begin position="499"/>
        <end position="521"/>
    </location>
</feature>
<feature type="zinc finger region" description="C2H2-type 13" evidence="2">
    <location>
        <begin position="527"/>
        <end position="549"/>
    </location>
</feature>
<feature type="zinc finger region" description="C2H2-type 14" evidence="2">
    <location>
        <begin position="555"/>
        <end position="577"/>
    </location>
</feature>
<feature type="zinc finger region" description="C2H2-type 15" evidence="2">
    <location>
        <begin position="583"/>
        <end position="605"/>
    </location>
</feature>
<feature type="region of interest" description="Disordered" evidence="4">
    <location>
        <begin position="119"/>
        <end position="139"/>
    </location>
</feature>
<feature type="compositionally biased region" description="Polar residues" evidence="4">
    <location>
        <begin position="119"/>
        <end position="129"/>
    </location>
</feature>
<feature type="sequence variant" id="VAR_047330" description="In dbSNP:rs35914474." evidence="5 6 7">
    <original>P</original>
    <variation>L</variation>
    <location>
        <position position="134"/>
    </location>
</feature>
<feature type="sequence variant" id="VAR_027716" description="In dbSNP:rs3760849.">
    <original>K</original>
    <variation>R</variation>
    <location>
        <position position="260"/>
    </location>
</feature>
<feature type="sequence variant" id="VAR_027717" description="In dbSNP:rs12610019.">
    <original>T</original>
    <variation>A</variation>
    <location>
        <position position="540"/>
    </location>
</feature>
<feature type="sequence conflict" description="In Ref. 2; CAI46040." evidence="8" ref="2">
    <original>S</original>
    <variation>P</variation>
    <location>
        <position position="139"/>
    </location>
</feature>
<feature type="sequence conflict" description="In Ref. 1; AK024073." evidence="8" ref="1">
    <original>A</original>
    <variation>T</variation>
    <location>
        <position position="512"/>
    </location>
</feature>
<feature type="sequence conflict" description="In Ref. 1; AK024073 and 2; CAI46040." evidence="8" ref="1 2">
    <original>S</original>
    <variation>G</variation>
    <location>
        <position position="593"/>
    </location>
</feature>
<proteinExistence type="evidence at protein level"/>